<name>PLSY_NITSB</name>
<dbReference type="EC" id="2.3.1.275" evidence="1"/>
<dbReference type="EMBL" id="AP009178">
    <property type="protein sequence ID" value="BAF69527.1"/>
    <property type="molecule type" value="Genomic_DNA"/>
</dbReference>
<dbReference type="RefSeq" id="WP_012081790.1">
    <property type="nucleotide sequence ID" value="NC_009662.1"/>
</dbReference>
<dbReference type="SMR" id="A6Q218"/>
<dbReference type="FunCoup" id="A6Q218">
    <property type="interactions" value="169"/>
</dbReference>
<dbReference type="STRING" id="387092.NIS_0413"/>
<dbReference type="KEGG" id="nis:NIS_0413"/>
<dbReference type="eggNOG" id="COG0344">
    <property type="taxonomic scope" value="Bacteria"/>
</dbReference>
<dbReference type="HOGENOM" id="CLU_081254_2_0_7"/>
<dbReference type="InParanoid" id="A6Q218"/>
<dbReference type="OrthoDB" id="9777124at2"/>
<dbReference type="UniPathway" id="UPA00085"/>
<dbReference type="Proteomes" id="UP000001118">
    <property type="component" value="Chromosome"/>
</dbReference>
<dbReference type="GO" id="GO:0005886">
    <property type="term" value="C:plasma membrane"/>
    <property type="evidence" value="ECO:0007669"/>
    <property type="project" value="UniProtKB-SubCell"/>
</dbReference>
<dbReference type="GO" id="GO:0043772">
    <property type="term" value="F:acyl-phosphate glycerol-3-phosphate acyltransferase activity"/>
    <property type="evidence" value="ECO:0007669"/>
    <property type="project" value="UniProtKB-UniRule"/>
</dbReference>
<dbReference type="GO" id="GO:0008654">
    <property type="term" value="P:phospholipid biosynthetic process"/>
    <property type="evidence" value="ECO:0007669"/>
    <property type="project" value="UniProtKB-UniRule"/>
</dbReference>
<dbReference type="HAMAP" id="MF_01043">
    <property type="entry name" value="PlsY"/>
    <property type="match status" value="1"/>
</dbReference>
<dbReference type="InterPro" id="IPR003811">
    <property type="entry name" value="G3P_acylTferase_PlsY"/>
</dbReference>
<dbReference type="NCBIfam" id="TIGR00023">
    <property type="entry name" value="glycerol-3-phosphate 1-O-acyltransferase PlsY"/>
    <property type="match status" value="1"/>
</dbReference>
<dbReference type="PANTHER" id="PTHR30309:SF0">
    <property type="entry name" value="GLYCEROL-3-PHOSPHATE ACYLTRANSFERASE-RELATED"/>
    <property type="match status" value="1"/>
</dbReference>
<dbReference type="PANTHER" id="PTHR30309">
    <property type="entry name" value="INNER MEMBRANE PROTEIN YGIH"/>
    <property type="match status" value="1"/>
</dbReference>
<dbReference type="Pfam" id="PF02660">
    <property type="entry name" value="G3P_acyltransf"/>
    <property type="match status" value="1"/>
</dbReference>
<dbReference type="SMART" id="SM01207">
    <property type="entry name" value="G3P_acyltransf"/>
    <property type="match status" value="1"/>
</dbReference>
<feature type="chain" id="PRO_1000064200" description="Glycerol-3-phosphate acyltransferase">
    <location>
        <begin position="1"/>
        <end position="209"/>
    </location>
</feature>
<feature type="transmembrane region" description="Helical" evidence="1">
    <location>
        <begin position="8"/>
        <end position="28"/>
    </location>
</feature>
<feature type="transmembrane region" description="Helical" evidence="1">
    <location>
        <begin position="78"/>
        <end position="98"/>
    </location>
</feature>
<feature type="transmembrane region" description="Helical" evidence="1">
    <location>
        <begin position="124"/>
        <end position="144"/>
    </location>
</feature>
<feature type="transmembrane region" description="Helical" evidence="1">
    <location>
        <begin position="149"/>
        <end position="169"/>
    </location>
</feature>
<feature type="transmembrane region" description="Helical" evidence="1">
    <location>
        <begin position="170"/>
        <end position="190"/>
    </location>
</feature>
<reference key="1">
    <citation type="journal article" date="2007" name="Proc. Natl. Acad. Sci. U.S.A.">
        <title>Deep-sea vent epsilon-proteobacterial genomes provide insights into emergence of pathogens.</title>
        <authorList>
            <person name="Nakagawa S."/>
            <person name="Takaki Y."/>
            <person name="Shimamura S."/>
            <person name="Reysenbach A.-L."/>
            <person name="Takai K."/>
            <person name="Horikoshi K."/>
        </authorList>
    </citation>
    <scope>NUCLEOTIDE SEQUENCE [LARGE SCALE GENOMIC DNA]</scope>
    <source>
        <strain>SB155-2</strain>
    </source>
</reference>
<accession>A6Q218</accession>
<comment type="function">
    <text evidence="1">Catalyzes the transfer of an acyl group from acyl-phosphate (acyl-PO(4)) to glycerol-3-phosphate (G3P) to form lysophosphatidic acid (LPA). This enzyme utilizes acyl-phosphate as fatty acyl donor, but not acyl-CoA or acyl-ACP.</text>
</comment>
<comment type="catalytic activity">
    <reaction evidence="1">
        <text>an acyl phosphate + sn-glycerol 3-phosphate = a 1-acyl-sn-glycero-3-phosphate + phosphate</text>
        <dbReference type="Rhea" id="RHEA:34075"/>
        <dbReference type="ChEBI" id="CHEBI:43474"/>
        <dbReference type="ChEBI" id="CHEBI:57597"/>
        <dbReference type="ChEBI" id="CHEBI:57970"/>
        <dbReference type="ChEBI" id="CHEBI:59918"/>
        <dbReference type="EC" id="2.3.1.275"/>
    </reaction>
</comment>
<comment type="pathway">
    <text evidence="1">Lipid metabolism; phospholipid metabolism.</text>
</comment>
<comment type="subunit">
    <text evidence="1">Probably interacts with PlsX.</text>
</comment>
<comment type="subcellular location">
    <subcellularLocation>
        <location evidence="1">Cell inner membrane</location>
        <topology evidence="1">Multi-pass membrane protein</topology>
    </subcellularLocation>
</comment>
<comment type="similarity">
    <text evidence="1">Belongs to the PlsY family.</text>
</comment>
<gene>
    <name evidence="1" type="primary">plsY</name>
    <name type="ordered locus">NIS_0413</name>
</gene>
<organism>
    <name type="scientific">Nitratiruptor sp. (strain SB155-2)</name>
    <dbReference type="NCBI Taxonomy" id="387092"/>
    <lineage>
        <taxon>Bacteria</taxon>
        <taxon>Pseudomonadati</taxon>
        <taxon>Campylobacterota</taxon>
        <taxon>Epsilonproteobacteria</taxon>
        <taxon>Nautiliales</taxon>
        <taxon>Nitratiruptoraceae</taxon>
        <taxon>Nitratiruptor</taxon>
    </lineage>
</organism>
<keyword id="KW-0997">Cell inner membrane</keyword>
<keyword id="KW-1003">Cell membrane</keyword>
<keyword id="KW-0444">Lipid biosynthesis</keyword>
<keyword id="KW-0443">Lipid metabolism</keyword>
<keyword id="KW-0472">Membrane</keyword>
<keyword id="KW-0594">Phospholipid biosynthesis</keyword>
<keyword id="KW-1208">Phospholipid metabolism</keyword>
<keyword id="KW-1185">Reference proteome</keyword>
<keyword id="KW-0808">Transferase</keyword>
<keyword id="KW-0812">Transmembrane</keyword>
<keyword id="KW-1133">Transmembrane helix</keyword>
<proteinExistence type="inferred from homology"/>
<evidence type="ECO:0000255" key="1">
    <source>
        <dbReference type="HAMAP-Rule" id="MF_01043"/>
    </source>
</evidence>
<protein>
    <recommendedName>
        <fullName evidence="1">Glycerol-3-phosphate acyltransferase</fullName>
    </recommendedName>
    <alternativeName>
        <fullName evidence="1">Acyl-PO4 G3P acyltransferase</fullName>
    </alternativeName>
    <alternativeName>
        <fullName evidence="1">Acyl-phosphate--glycerol-3-phosphate acyltransferase</fullName>
    </alternativeName>
    <alternativeName>
        <fullName evidence="1">G3P acyltransferase</fullName>
        <shortName evidence="1">GPAT</shortName>
        <ecNumber evidence="1">2.3.1.275</ecNumber>
    </alternativeName>
    <alternativeName>
        <fullName evidence="1">Lysophosphatidic acid synthase</fullName>
        <shortName evidence="1">LPA synthase</shortName>
    </alternativeName>
</protein>
<sequence>MDFFTNPNVLFYITAYLVGGIPFGYILAKIFAGVDIKQSGSKSIGATNVLRVVKEKDPKLAKKLAIATVVFDALKGAVLVLIAKLLGFPPATWWLIGIMTVLGHCYSPFLKFEGGKGVATGMGVLLVLLPVETIIGIVTWLIVAKTTKISSLSSLSGLVALVVASFIVHPDMPYVHSHAPLLLLAFIIFYKHLPNIKRLLTGQEGKVAA</sequence>